<protein>
    <recommendedName>
        <fullName evidence="1">Multidrug resistance protein MdtC</fullName>
    </recommendedName>
    <alternativeName>
        <fullName evidence="1">Multidrug transporter MdtC</fullName>
    </alternativeName>
</protein>
<sequence>MKFFALFIYRPVATILLSVAITLCGILGFRMLPVAPLPQVDFPVIMVSASLPGASPETMASSVATPLERSLGRIAGVSEMTSSSSLGSTRIILQFDFDRDINGAARDVQAAINAAQSLLPSGMPSRPTYRKANPSDAPIMILTLTSDTYSQGELYDFASTQLAPTISQIDGVGDVDVGGSSLPAVRVGLNPQALFNQGVSLDDVRTAVSNANVRKPQGALEDGTHRWQIQTNDELKTAAEYQPLIIHYNNGGAVRLGDVATVTDSVQDVRNAGMTNAKPAILLMIRKLPEANIIQTVDSIRAKLPELQETIPAAIDLQIAQDRSPTIRASLEEVEQTLIISVALVILVVFLFLRSGRATIIPAVSVPVSLIGTFAAMYLCGFSLNNLSLMALTIATGFVVDDAIVVLENIARHLEAGMKPLQAALQGTREVGFTVLSMSLSLVAVFLPLLLMGGLPGRLLREFAVTLSVAIGISLLVSLTLTPMMCGWMLKASKPREQKRLRGFGRMLVALQQGYGKSLKWVLNHTRLVGVVLLGTIALNIWLYISIPKTFFPEQDTGVLMGGIQADQSISFQAMRGKLQDFMKIIRDDPAVDNVTGFTGGSRVNSGMMFITLKPRDERSETAQQIIDRLRVKLAKEPGANLFLMAVQDIRVGGRQSNASYQYTLLSDDLAALREWEPKIRKKLATLPELADVNSDQQDNGAEMNLVYDRDTMARLGIDVQAANSLLNNAFGQRQISTIYQPMNQYKVVMEVDPRYTQDISALEKMFVINNEGKAIPLSYFAKWQPANAPLSVNHQGLSAASTISFNLPTGKSLSDASAAIDRAMTQLGVPSTVRGSFAGTAQVFQETMNSQVILIIAAIATVYIVLGILYESYVHPLTILSTLPSAGVGALLALELFNAPFSLIALIGIMLLIGIVKKNAIMMVDFALEAQRHGNLTPQEAIFQACLLRFRPIMMTTLAALFGALPLVLSGGDGSELRQPLGITIVGGLVMSQLLTLYTTPVVYLFFDRLRLRFSRKPKQTVTE</sequence>
<proteinExistence type="evidence at transcript level"/>
<organism>
    <name type="scientific">Escherichia coli (strain ATCC 8739 / DSM 1576 / NBRC 3972 / NCIMB 8545 / WDCM 00012 / Crooks)</name>
    <dbReference type="NCBI Taxonomy" id="481805"/>
    <lineage>
        <taxon>Bacteria</taxon>
        <taxon>Pseudomonadati</taxon>
        <taxon>Pseudomonadota</taxon>
        <taxon>Gammaproteobacteria</taxon>
        <taxon>Enterobacterales</taxon>
        <taxon>Enterobacteriaceae</taxon>
        <taxon>Escherichia</taxon>
    </lineage>
</organism>
<evidence type="ECO:0000255" key="1">
    <source>
        <dbReference type="HAMAP-Rule" id="MF_01424"/>
    </source>
</evidence>
<gene>
    <name evidence="1" type="primary">mdtC</name>
    <name type="ordered locus">EcolC_1565</name>
</gene>
<comment type="function">
    <text evidence="1">The MdtABC tripartite complex confers resistance against novobiocin and deoxycholate.</text>
</comment>
<comment type="subunit">
    <text evidence="1">Part of a tripartite efflux system composed of MdtA, MdtB and MdtC. MdtC forms a heteromultimer with MdtB.</text>
</comment>
<comment type="subcellular location">
    <subcellularLocation>
        <location evidence="1">Cell inner membrane</location>
        <topology evidence="1">Multi-pass membrane protein</topology>
    </subcellularLocation>
</comment>
<comment type="induction">
    <text>The mdtABC operon is transcriptionally activated by BaeR.</text>
</comment>
<comment type="similarity">
    <text evidence="1">Belongs to the resistance-nodulation-cell division (RND) (TC 2.A.6) family. MdtC subfamily.</text>
</comment>
<accession>B1IYZ8</accession>
<dbReference type="EMBL" id="CP000946">
    <property type="protein sequence ID" value="ACA77224.1"/>
    <property type="molecule type" value="Genomic_DNA"/>
</dbReference>
<dbReference type="RefSeq" id="WP_000667585.1">
    <property type="nucleotide sequence ID" value="NZ_MTFT01000031.1"/>
</dbReference>
<dbReference type="SMR" id="B1IYZ8"/>
<dbReference type="KEGG" id="ecl:EcolC_1565"/>
<dbReference type="HOGENOM" id="CLU_002755_1_2_6"/>
<dbReference type="GO" id="GO:0005886">
    <property type="term" value="C:plasma membrane"/>
    <property type="evidence" value="ECO:0007669"/>
    <property type="project" value="UniProtKB-SubCell"/>
</dbReference>
<dbReference type="GO" id="GO:0042910">
    <property type="term" value="F:xenobiotic transmembrane transporter activity"/>
    <property type="evidence" value="ECO:0007669"/>
    <property type="project" value="TreeGrafter"/>
</dbReference>
<dbReference type="FunFam" id="1.20.1640.10:FF:000001">
    <property type="entry name" value="Efflux pump membrane transporter"/>
    <property type="match status" value="1"/>
</dbReference>
<dbReference type="FunFam" id="3.30.70.1430:FF:000001">
    <property type="entry name" value="Efflux pump membrane transporter"/>
    <property type="match status" value="1"/>
</dbReference>
<dbReference type="FunFam" id="3.30.2090.10:FF:000004">
    <property type="entry name" value="Multidrug resistance protein MdtC"/>
    <property type="match status" value="1"/>
</dbReference>
<dbReference type="FunFam" id="3.30.2090.10:FF:000005">
    <property type="entry name" value="Multidrug resistance protein MdtC"/>
    <property type="match status" value="1"/>
</dbReference>
<dbReference type="FunFam" id="3.30.70.1430:FF:000004">
    <property type="entry name" value="Multidrug resistance protein MdtC"/>
    <property type="match status" value="1"/>
</dbReference>
<dbReference type="Gene3D" id="3.30.70.1430">
    <property type="entry name" value="Multidrug efflux transporter AcrB pore domain"/>
    <property type="match status" value="2"/>
</dbReference>
<dbReference type="Gene3D" id="3.30.70.1440">
    <property type="entry name" value="Multidrug efflux transporter AcrB pore domain"/>
    <property type="match status" value="1"/>
</dbReference>
<dbReference type="Gene3D" id="3.30.70.1320">
    <property type="entry name" value="Multidrug efflux transporter AcrB pore domain like"/>
    <property type="match status" value="1"/>
</dbReference>
<dbReference type="Gene3D" id="3.30.2090.10">
    <property type="entry name" value="Multidrug efflux transporter AcrB TolC docking domain, DN and DC subdomains"/>
    <property type="match status" value="2"/>
</dbReference>
<dbReference type="Gene3D" id="1.20.1640.10">
    <property type="entry name" value="Multidrug efflux transporter AcrB transmembrane domain"/>
    <property type="match status" value="2"/>
</dbReference>
<dbReference type="HAMAP" id="MF_01424">
    <property type="entry name" value="MdtC"/>
    <property type="match status" value="1"/>
</dbReference>
<dbReference type="InterPro" id="IPR027463">
    <property type="entry name" value="AcrB_DN_DC_subdom"/>
</dbReference>
<dbReference type="InterPro" id="IPR001036">
    <property type="entry name" value="Acrflvin-R"/>
</dbReference>
<dbReference type="InterPro" id="IPR023931">
    <property type="entry name" value="Multidrug-R_MdtC"/>
</dbReference>
<dbReference type="NCBIfam" id="NF007905">
    <property type="entry name" value="PRK10614.1"/>
    <property type="match status" value="1"/>
</dbReference>
<dbReference type="NCBIfam" id="NF033617">
    <property type="entry name" value="RND_permease_2"/>
    <property type="match status" value="1"/>
</dbReference>
<dbReference type="PANTHER" id="PTHR32063">
    <property type="match status" value="1"/>
</dbReference>
<dbReference type="PANTHER" id="PTHR32063:SF34">
    <property type="entry name" value="MULTIDRUG RESISTANCE PROTEIN MDTC"/>
    <property type="match status" value="1"/>
</dbReference>
<dbReference type="Pfam" id="PF00873">
    <property type="entry name" value="ACR_tran"/>
    <property type="match status" value="1"/>
</dbReference>
<dbReference type="PRINTS" id="PR00702">
    <property type="entry name" value="ACRIFLAVINRP"/>
</dbReference>
<dbReference type="SUPFAM" id="SSF82693">
    <property type="entry name" value="Multidrug efflux transporter AcrB pore domain, PN1, PN2, PC1 and PC2 subdomains"/>
    <property type="match status" value="4"/>
</dbReference>
<dbReference type="SUPFAM" id="SSF82714">
    <property type="entry name" value="Multidrug efflux transporter AcrB TolC docking domain, DN and DC subdomains"/>
    <property type="match status" value="2"/>
</dbReference>
<dbReference type="SUPFAM" id="SSF82866">
    <property type="entry name" value="Multidrug efflux transporter AcrB transmembrane domain"/>
    <property type="match status" value="2"/>
</dbReference>
<keyword id="KW-0997">Cell inner membrane</keyword>
<keyword id="KW-1003">Cell membrane</keyword>
<keyword id="KW-0472">Membrane</keyword>
<keyword id="KW-0812">Transmembrane</keyword>
<keyword id="KW-1133">Transmembrane helix</keyword>
<keyword id="KW-0813">Transport</keyword>
<reference key="1">
    <citation type="submission" date="2008-02" db="EMBL/GenBank/DDBJ databases">
        <title>Complete sequence of Escherichia coli C str. ATCC 8739.</title>
        <authorList>
            <person name="Copeland A."/>
            <person name="Lucas S."/>
            <person name="Lapidus A."/>
            <person name="Glavina del Rio T."/>
            <person name="Dalin E."/>
            <person name="Tice H."/>
            <person name="Bruce D."/>
            <person name="Goodwin L."/>
            <person name="Pitluck S."/>
            <person name="Kiss H."/>
            <person name="Brettin T."/>
            <person name="Detter J.C."/>
            <person name="Han C."/>
            <person name="Kuske C.R."/>
            <person name="Schmutz J."/>
            <person name="Larimer F."/>
            <person name="Land M."/>
            <person name="Hauser L."/>
            <person name="Kyrpides N."/>
            <person name="Mikhailova N."/>
            <person name="Ingram L."/>
            <person name="Richardson P."/>
        </authorList>
    </citation>
    <scope>NUCLEOTIDE SEQUENCE [LARGE SCALE GENOMIC DNA]</scope>
    <source>
        <strain>ATCC 8739 / DSM 1576 / NBRC 3972 / NCIMB 8545 / WDCM 00012 / Crooks</strain>
    </source>
</reference>
<feature type="chain" id="PRO_1000087416" description="Multidrug resistance protein MdtC">
    <location>
        <begin position="1"/>
        <end position="1025"/>
    </location>
</feature>
<feature type="transmembrane region" description="Helical" evidence="1">
    <location>
        <begin position="3"/>
        <end position="23"/>
    </location>
</feature>
<feature type="transmembrane region" description="Helical" evidence="1">
    <location>
        <begin position="333"/>
        <end position="353"/>
    </location>
</feature>
<feature type="transmembrane region" description="Helical" evidence="1">
    <location>
        <begin position="360"/>
        <end position="380"/>
    </location>
</feature>
<feature type="transmembrane region" description="Helical" evidence="1">
    <location>
        <begin position="387"/>
        <end position="407"/>
    </location>
</feature>
<feature type="transmembrane region" description="Helical" evidence="1">
    <location>
        <begin position="431"/>
        <end position="451"/>
    </location>
</feature>
<feature type="transmembrane region" description="Helical" evidence="1">
    <location>
        <begin position="463"/>
        <end position="483"/>
    </location>
</feature>
<feature type="transmembrane region" description="Helical" evidence="1">
    <location>
        <begin position="528"/>
        <end position="548"/>
    </location>
</feature>
<feature type="transmembrane region" description="Helical" evidence="1">
    <location>
        <begin position="853"/>
        <end position="873"/>
    </location>
</feature>
<feature type="transmembrane region" description="Helical" evidence="1">
    <location>
        <begin position="875"/>
        <end position="895"/>
    </location>
</feature>
<feature type="transmembrane region" description="Helical" evidence="1">
    <location>
        <begin position="897"/>
        <end position="917"/>
    </location>
</feature>
<feature type="transmembrane region" description="Helical" evidence="1">
    <location>
        <begin position="953"/>
        <end position="973"/>
    </location>
</feature>
<feature type="transmembrane region" description="Helical" evidence="1">
    <location>
        <begin position="984"/>
        <end position="1004"/>
    </location>
</feature>
<name>MDTC_ECOLC</name>